<accession>P46903</accession>
<keyword id="KW-0067">ATP-binding</keyword>
<keyword id="KW-0406">Ion transport</keyword>
<keyword id="KW-0547">Nucleotide-binding</keyword>
<keyword id="KW-1185">Reference proteome</keyword>
<keyword id="KW-0915">Sodium</keyword>
<keyword id="KW-0739">Sodium transport</keyword>
<keyword id="KW-1278">Translocase</keyword>
<keyword id="KW-0813">Transport</keyword>
<evidence type="ECO:0000255" key="1">
    <source>
        <dbReference type="PROSITE-ProRule" id="PRU00434"/>
    </source>
</evidence>
<evidence type="ECO:0000269" key="2">
    <source>
    </source>
</evidence>
<evidence type="ECO:0000269" key="3">
    <source>
    </source>
</evidence>
<evidence type="ECO:0000303" key="4">
    <source>
    </source>
</evidence>
<evidence type="ECO:0000305" key="5"/>
<evidence type="ECO:0000312" key="6">
    <source>
        <dbReference type="EMBL" id="CAB12069.1"/>
    </source>
</evidence>
<gene>
    <name evidence="4" type="primary">natA</name>
    <name evidence="6" type="ordered locus">BSU02750</name>
</gene>
<feature type="chain" id="PRO_0000092616" description="ABC transporter ATP-binding protein NatA">
    <location>
        <begin position="1"/>
        <end position="246"/>
    </location>
</feature>
<feature type="domain" description="ABC transporter" evidence="1">
    <location>
        <begin position="2"/>
        <end position="237"/>
    </location>
</feature>
<feature type="binding site" evidence="1">
    <location>
        <begin position="38"/>
        <end position="45"/>
    </location>
    <ligand>
        <name>ATP</name>
        <dbReference type="ChEBI" id="CHEBI:30616"/>
    </ligand>
</feature>
<organism>
    <name type="scientific">Bacillus subtilis (strain 168)</name>
    <dbReference type="NCBI Taxonomy" id="224308"/>
    <lineage>
        <taxon>Bacteria</taxon>
        <taxon>Bacillati</taxon>
        <taxon>Bacillota</taxon>
        <taxon>Bacilli</taxon>
        <taxon>Bacillales</taxon>
        <taxon>Bacillaceae</taxon>
        <taxon>Bacillus</taxon>
    </lineage>
</organism>
<reference key="1">
    <citation type="journal article" date="1997" name="Mol. Microbiol.">
        <title>A two-gene ABC-type transport system that extrudes Na+ in Bacillus subtilis is induced by ethanol or protonophore.</title>
        <authorList>
            <person name="Cheng J."/>
            <person name="Guffanti A.A."/>
            <person name="Krulwich T.A."/>
        </authorList>
    </citation>
    <scope>NUCLEOTIDE SEQUENCE [GENOMIC DNA]</scope>
    <scope>FUNCTION</scope>
    <scope>CATALYTIC ACTIVITY</scope>
    <scope>SUBUNIT</scope>
    <scope>INDUCTION</scope>
    <source>
        <strain>BD99</strain>
    </source>
</reference>
<reference key="2">
    <citation type="journal article" date="1997" name="Microbiology">
        <title>A 32 kb nucleotide sequence from the region of the lincomycin-resistance gene (22 degrees-25 degrees) of the Bacillus subtilis chromosome and identification of the site of the lin-2 mutation.</title>
        <authorList>
            <person name="Kumano M."/>
            <person name="Tamakoshi A."/>
            <person name="Yamane K."/>
        </authorList>
    </citation>
    <scope>NUCLEOTIDE SEQUENCE [GENOMIC DNA]</scope>
    <source>
        <strain>168</strain>
    </source>
</reference>
<reference key="3">
    <citation type="journal article" date="1997" name="Nature">
        <title>The complete genome sequence of the Gram-positive bacterium Bacillus subtilis.</title>
        <authorList>
            <person name="Kunst F."/>
            <person name="Ogasawara N."/>
            <person name="Moszer I."/>
            <person name="Albertini A.M."/>
            <person name="Alloni G."/>
            <person name="Azevedo V."/>
            <person name="Bertero M.G."/>
            <person name="Bessieres P."/>
            <person name="Bolotin A."/>
            <person name="Borchert S."/>
            <person name="Borriss R."/>
            <person name="Boursier L."/>
            <person name="Brans A."/>
            <person name="Braun M."/>
            <person name="Brignell S.C."/>
            <person name="Bron S."/>
            <person name="Brouillet S."/>
            <person name="Bruschi C.V."/>
            <person name="Caldwell B."/>
            <person name="Capuano V."/>
            <person name="Carter N.M."/>
            <person name="Choi S.-K."/>
            <person name="Codani J.-J."/>
            <person name="Connerton I.F."/>
            <person name="Cummings N.J."/>
            <person name="Daniel R.A."/>
            <person name="Denizot F."/>
            <person name="Devine K.M."/>
            <person name="Duesterhoeft A."/>
            <person name="Ehrlich S.D."/>
            <person name="Emmerson P.T."/>
            <person name="Entian K.-D."/>
            <person name="Errington J."/>
            <person name="Fabret C."/>
            <person name="Ferrari E."/>
            <person name="Foulger D."/>
            <person name="Fritz C."/>
            <person name="Fujita M."/>
            <person name="Fujita Y."/>
            <person name="Fuma S."/>
            <person name="Galizzi A."/>
            <person name="Galleron N."/>
            <person name="Ghim S.-Y."/>
            <person name="Glaser P."/>
            <person name="Goffeau A."/>
            <person name="Golightly E.J."/>
            <person name="Grandi G."/>
            <person name="Guiseppi G."/>
            <person name="Guy B.J."/>
            <person name="Haga K."/>
            <person name="Haiech J."/>
            <person name="Harwood C.R."/>
            <person name="Henaut A."/>
            <person name="Hilbert H."/>
            <person name="Holsappel S."/>
            <person name="Hosono S."/>
            <person name="Hullo M.-F."/>
            <person name="Itaya M."/>
            <person name="Jones L.-M."/>
            <person name="Joris B."/>
            <person name="Karamata D."/>
            <person name="Kasahara Y."/>
            <person name="Klaerr-Blanchard M."/>
            <person name="Klein C."/>
            <person name="Kobayashi Y."/>
            <person name="Koetter P."/>
            <person name="Koningstein G."/>
            <person name="Krogh S."/>
            <person name="Kumano M."/>
            <person name="Kurita K."/>
            <person name="Lapidus A."/>
            <person name="Lardinois S."/>
            <person name="Lauber J."/>
            <person name="Lazarevic V."/>
            <person name="Lee S.-M."/>
            <person name="Levine A."/>
            <person name="Liu H."/>
            <person name="Masuda S."/>
            <person name="Mauel C."/>
            <person name="Medigue C."/>
            <person name="Medina N."/>
            <person name="Mellado R.P."/>
            <person name="Mizuno M."/>
            <person name="Moestl D."/>
            <person name="Nakai S."/>
            <person name="Noback M."/>
            <person name="Noone D."/>
            <person name="O'Reilly M."/>
            <person name="Ogawa K."/>
            <person name="Ogiwara A."/>
            <person name="Oudega B."/>
            <person name="Park S.-H."/>
            <person name="Parro V."/>
            <person name="Pohl T.M."/>
            <person name="Portetelle D."/>
            <person name="Porwollik S."/>
            <person name="Prescott A.M."/>
            <person name="Presecan E."/>
            <person name="Pujic P."/>
            <person name="Purnelle B."/>
            <person name="Rapoport G."/>
            <person name="Rey M."/>
            <person name="Reynolds S."/>
            <person name="Rieger M."/>
            <person name="Rivolta C."/>
            <person name="Rocha E."/>
            <person name="Roche B."/>
            <person name="Rose M."/>
            <person name="Sadaie Y."/>
            <person name="Sato T."/>
            <person name="Scanlan E."/>
            <person name="Schleich S."/>
            <person name="Schroeter R."/>
            <person name="Scoffone F."/>
            <person name="Sekiguchi J."/>
            <person name="Sekowska A."/>
            <person name="Seror S.J."/>
            <person name="Serror P."/>
            <person name="Shin B.-S."/>
            <person name="Soldo B."/>
            <person name="Sorokin A."/>
            <person name="Tacconi E."/>
            <person name="Takagi T."/>
            <person name="Takahashi H."/>
            <person name="Takemaru K."/>
            <person name="Takeuchi M."/>
            <person name="Tamakoshi A."/>
            <person name="Tanaka T."/>
            <person name="Terpstra P."/>
            <person name="Tognoni A."/>
            <person name="Tosato V."/>
            <person name="Uchiyama S."/>
            <person name="Vandenbol M."/>
            <person name="Vannier F."/>
            <person name="Vassarotti A."/>
            <person name="Viari A."/>
            <person name="Wambutt R."/>
            <person name="Wedler E."/>
            <person name="Wedler H."/>
            <person name="Weitzenegger T."/>
            <person name="Winters P."/>
            <person name="Wipat A."/>
            <person name="Yamamoto H."/>
            <person name="Yamane K."/>
            <person name="Yasumoto K."/>
            <person name="Yata K."/>
            <person name="Yoshida K."/>
            <person name="Yoshikawa H.-F."/>
            <person name="Zumstein E."/>
            <person name="Yoshikawa H."/>
            <person name="Danchin A."/>
        </authorList>
    </citation>
    <scope>NUCLEOTIDE SEQUENCE [LARGE SCALE GENOMIC DNA]</scope>
    <source>
        <strain>168</strain>
    </source>
</reference>
<reference key="4">
    <citation type="journal article" date="2007" name="Microbiology">
        <title>The Bacillus subtilis NatK-NatR two-component system regulates expression of the natAB operon encoding an ABC transporter for sodium ion extrusion.</title>
        <authorList>
            <person name="Ogura M."/>
            <person name="Tsukahara K."/>
            <person name="Hayashi K."/>
            <person name="Tanaka T."/>
        </authorList>
    </citation>
    <scope>INDUCTION</scope>
    <source>
        <strain>168</strain>
    </source>
</reference>
<proteinExistence type="evidence at protein level"/>
<sequence>MITLTDCSRRFQDKKKVVKAVRDVSLTIEKGEVVGILGENGAGKTTMLRMIASLLEPSQGVITVDGFDTVKQPAEVKQRIGVLFGGETGLYDRMTAKENLQYFGRLYGLNRHEIKARIEDLSKRFGMRDYMNRRVGGFSKGMRQKVAIARALIHDPDIILFDEPTTGLDITSSNIFREFIQQLKREQKTILFSSHIMEEVQALCDSVIMIHSGEVIYRGALESLYESERSEDLNYIFMSKLVRGIS</sequence>
<name>NATA_BACSU</name>
<dbReference type="EC" id="7.2.2.4" evidence="3"/>
<dbReference type="EMBL" id="U30873">
    <property type="protein sequence ID" value="AAB53022.1"/>
    <property type="molecule type" value="Genomic_DNA"/>
</dbReference>
<dbReference type="EMBL" id="AB000617">
    <property type="protein sequence ID" value="BAA22236.1"/>
    <property type="molecule type" value="Genomic_DNA"/>
</dbReference>
<dbReference type="EMBL" id="AL009126">
    <property type="protein sequence ID" value="CAB12069.1"/>
    <property type="molecule type" value="Genomic_DNA"/>
</dbReference>
<dbReference type="PIR" id="A69666">
    <property type="entry name" value="A69666"/>
</dbReference>
<dbReference type="RefSeq" id="NP_388157.1">
    <property type="nucleotide sequence ID" value="NC_000964.3"/>
</dbReference>
<dbReference type="RefSeq" id="WP_003234757.1">
    <property type="nucleotide sequence ID" value="NZ_OZ025638.1"/>
</dbReference>
<dbReference type="SMR" id="P46903"/>
<dbReference type="FunCoup" id="P46903">
    <property type="interactions" value="587"/>
</dbReference>
<dbReference type="STRING" id="224308.BSU02750"/>
<dbReference type="TCDB" id="3.A.1.115.1">
    <property type="family name" value="the atp-binding cassette (abc) superfamily"/>
</dbReference>
<dbReference type="PaxDb" id="224308-BSU02750"/>
<dbReference type="EnsemblBacteria" id="CAB12069">
    <property type="protein sequence ID" value="CAB12069"/>
    <property type="gene ID" value="BSU_02750"/>
</dbReference>
<dbReference type="GeneID" id="938386"/>
<dbReference type="KEGG" id="bsu:BSU02750"/>
<dbReference type="PATRIC" id="fig|224308.179.peg.285"/>
<dbReference type="eggNOG" id="COG4555">
    <property type="taxonomic scope" value="Bacteria"/>
</dbReference>
<dbReference type="InParanoid" id="P46903"/>
<dbReference type="OrthoDB" id="9804819at2"/>
<dbReference type="PhylomeDB" id="P46903"/>
<dbReference type="BioCyc" id="BSUB:BSU02750-MONOMER"/>
<dbReference type="BioCyc" id="MetaCyc:BSU02750-MONOMER"/>
<dbReference type="BRENDA" id="7.2.2.4">
    <property type="organism ID" value="658"/>
</dbReference>
<dbReference type="Proteomes" id="UP000001570">
    <property type="component" value="Chromosome"/>
</dbReference>
<dbReference type="GO" id="GO:0140679">
    <property type="term" value="F:ABC-type sodium transporter activity"/>
    <property type="evidence" value="ECO:0007669"/>
    <property type="project" value="UniProtKB-EC"/>
</dbReference>
<dbReference type="GO" id="GO:0005524">
    <property type="term" value="F:ATP binding"/>
    <property type="evidence" value="ECO:0007669"/>
    <property type="project" value="UniProtKB-KW"/>
</dbReference>
<dbReference type="GO" id="GO:0016887">
    <property type="term" value="F:ATP hydrolysis activity"/>
    <property type="evidence" value="ECO:0007669"/>
    <property type="project" value="InterPro"/>
</dbReference>
<dbReference type="CDD" id="cd03266">
    <property type="entry name" value="ABC_NatA_sodium_exporter"/>
    <property type="match status" value="1"/>
</dbReference>
<dbReference type="Gene3D" id="3.40.50.300">
    <property type="entry name" value="P-loop containing nucleotide triphosphate hydrolases"/>
    <property type="match status" value="1"/>
</dbReference>
<dbReference type="InterPro" id="IPR003593">
    <property type="entry name" value="AAA+_ATPase"/>
</dbReference>
<dbReference type="InterPro" id="IPR003439">
    <property type="entry name" value="ABC_transporter-like_ATP-bd"/>
</dbReference>
<dbReference type="InterPro" id="IPR017871">
    <property type="entry name" value="ABC_transporter-like_CS"/>
</dbReference>
<dbReference type="InterPro" id="IPR050763">
    <property type="entry name" value="ABC_transporter_ATP-binding"/>
</dbReference>
<dbReference type="InterPro" id="IPR027417">
    <property type="entry name" value="P-loop_NTPase"/>
</dbReference>
<dbReference type="PANTHER" id="PTHR42711">
    <property type="entry name" value="ABC TRANSPORTER ATP-BINDING PROTEIN"/>
    <property type="match status" value="1"/>
</dbReference>
<dbReference type="PANTHER" id="PTHR42711:SF5">
    <property type="entry name" value="ABC TRANSPORTER ATP-BINDING PROTEIN NATA"/>
    <property type="match status" value="1"/>
</dbReference>
<dbReference type="Pfam" id="PF00005">
    <property type="entry name" value="ABC_tran"/>
    <property type="match status" value="1"/>
</dbReference>
<dbReference type="SMART" id="SM00382">
    <property type="entry name" value="AAA"/>
    <property type="match status" value="1"/>
</dbReference>
<dbReference type="SUPFAM" id="SSF52540">
    <property type="entry name" value="P-loop containing nucleoside triphosphate hydrolases"/>
    <property type="match status" value="1"/>
</dbReference>
<dbReference type="PROSITE" id="PS00211">
    <property type="entry name" value="ABC_TRANSPORTER_1"/>
    <property type="match status" value="1"/>
</dbReference>
<dbReference type="PROSITE" id="PS50893">
    <property type="entry name" value="ABC_TRANSPORTER_2"/>
    <property type="match status" value="1"/>
</dbReference>
<comment type="function">
    <text evidence="3">Part of an ABC transporter that catalyzes ATP-dependent electrogenic sodium extrusion.</text>
</comment>
<comment type="catalytic activity">
    <reaction evidence="3">
        <text>Na(+)(in) + ATP + H2O = Na(+)(out) + ADP + phosphate + H(+)</text>
        <dbReference type="Rhea" id="RHEA:14633"/>
        <dbReference type="ChEBI" id="CHEBI:15377"/>
        <dbReference type="ChEBI" id="CHEBI:15378"/>
        <dbReference type="ChEBI" id="CHEBI:29101"/>
        <dbReference type="ChEBI" id="CHEBI:30616"/>
        <dbReference type="ChEBI" id="CHEBI:43474"/>
        <dbReference type="ChEBI" id="CHEBI:456216"/>
        <dbReference type="EC" id="7.2.2.4"/>
    </reaction>
</comment>
<comment type="subunit">
    <text evidence="3">The complex is composed of NatA and NatB.</text>
</comment>
<comment type="induction">
    <text evidence="2 3">Induced by ethanol and the protonophore carbonylcyanide p-chlorophenylhydrazone (CCCP) and, more modestly, by sodium and potassium. Positively regulated by the two-component regulatory system NatK/NatR.</text>
</comment>
<comment type="similarity">
    <text evidence="5">Belongs to the ABC transporter superfamily.</text>
</comment>
<protein>
    <recommendedName>
        <fullName evidence="5">ABC transporter ATP-binding protein NatA</fullName>
    </recommendedName>
    <alternativeName>
        <fullName>ABC-type Na(+) transporter</fullName>
        <ecNumber evidence="3">7.2.2.4</ecNumber>
    </alternativeName>
</protein>